<reference key="1">
    <citation type="submission" date="2008-04" db="EMBL/GenBank/DDBJ databases">
        <title>Complete sequence of chromosome 1 of Burkholderia ambifaria MC40-6.</title>
        <authorList>
            <person name="Copeland A."/>
            <person name="Lucas S."/>
            <person name="Lapidus A."/>
            <person name="Glavina del Rio T."/>
            <person name="Dalin E."/>
            <person name="Tice H."/>
            <person name="Pitluck S."/>
            <person name="Chain P."/>
            <person name="Malfatti S."/>
            <person name="Shin M."/>
            <person name="Vergez L."/>
            <person name="Lang D."/>
            <person name="Schmutz J."/>
            <person name="Larimer F."/>
            <person name="Land M."/>
            <person name="Hauser L."/>
            <person name="Kyrpides N."/>
            <person name="Lykidis A."/>
            <person name="Ramette A."/>
            <person name="Konstantinidis K."/>
            <person name="Tiedje J."/>
            <person name="Richardson P."/>
        </authorList>
    </citation>
    <scope>NUCLEOTIDE SEQUENCE [LARGE SCALE GENOMIC DNA]</scope>
    <source>
        <strain>MC40-6</strain>
    </source>
</reference>
<proteinExistence type="inferred from homology"/>
<comment type="function">
    <text evidence="1">ATPase subunit of a proteasome-like degradation complex; this subunit has chaperone activity. The binding of ATP and its subsequent hydrolysis by HslU are essential for unfolding of protein substrates subsequently hydrolyzed by HslV. HslU recognizes the N-terminal part of its protein substrates and unfolds these before they are guided to HslV for hydrolysis.</text>
</comment>
<comment type="subunit">
    <text evidence="1">A double ring-shaped homohexamer of HslV is capped on each side by a ring-shaped HslU homohexamer. The assembly of the HslU/HslV complex is dependent on binding of ATP.</text>
</comment>
<comment type="subcellular location">
    <subcellularLocation>
        <location evidence="1">Cytoplasm</location>
    </subcellularLocation>
</comment>
<comment type="similarity">
    <text evidence="1">Belongs to the ClpX chaperone family. HslU subfamily.</text>
</comment>
<sequence>MSTMTPAEIVSELDKHIIGQAKAKKAVAVALRNRWRRQQVGEPLRQEITPKNILMIGPTGVGKTEIARRLAKLADAPFVKIEATKFTEVGYVGRDVDSIVRDLIEISVKQTREAEMRKVRSKATDQAEDRILDILLPQPRAVGFGGNADHANDDNNATRQTFRKRLREGQLDDKEVELDLEQPSAGMDIMAPPGMEEMTEQIRSMFSNLGSGKKQRRKVKIKEALKLLTDEEAAKMLNDEEVKTKAVQNVEQNGIVFLDEIDKITSRNNEGSGGEVSRQGVQRDLLPLVEGTTVNTKYGMVKTDHILFIASGAFHLAKPSDLIPELQGRFPIRVELDSLSVEDFEAILDATDASLVKQYQALLATEDVQLEFAADGIRRLAEIAYSVNEKTENIGARRLYTVIEKLLEEVSFSAGNHAGECVTIDATYVDRALGEVAQDEDLSRYVL</sequence>
<dbReference type="EMBL" id="CP001025">
    <property type="protein sequence ID" value="ACB65477.1"/>
    <property type="molecule type" value="Genomic_DNA"/>
</dbReference>
<dbReference type="RefSeq" id="WP_012364950.1">
    <property type="nucleotide sequence ID" value="NC_010551.1"/>
</dbReference>
<dbReference type="SMR" id="B1YPR3"/>
<dbReference type="KEGG" id="bac:BamMC406_3001"/>
<dbReference type="HOGENOM" id="CLU_033123_0_0_4"/>
<dbReference type="OrthoDB" id="9804062at2"/>
<dbReference type="Proteomes" id="UP000001680">
    <property type="component" value="Chromosome 1"/>
</dbReference>
<dbReference type="GO" id="GO:0009376">
    <property type="term" value="C:HslUV protease complex"/>
    <property type="evidence" value="ECO:0007669"/>
    <property type="project" value="UniProtKB-UniRule"/>
</dbReference>
<dbReference type="GO" id="GO:0005524">
    <property type="term" value="F:ATP binding"/>
    <property type="evidence" value="ECO:0007669"/>
    <property type="project" value="UniProtKB-UniRule"/>
</dbReference>
<dbReference type="GO" id="GO:0016887">
    <property type="term" value="F:ATP hydrolysis activity"/>
    <property type="evidence" value="ECO:0007669"/>
    <property type="project" value="InterPro"/>
</dbReference>
<dbReference type="GO" id="GO:0008233">
    <property type="term" value="F:peptidase activity"/>
    <property type="evidence" value="ECO:0007669"/>
    <property type="project" value="InterPro"/>
</dbReference>
<dbReference type="GO" id="GO:0036402">
    <property type="term" value="F:proteasome-activating activity"/>
    <property type="evidence" value="ECO:0007669"/>
    <property type="project" value="UniProtKB-UniRule"/>
</dbReference>
<dbReference type="GO" id="GO:0043335">
    <property type="term" value="P:protein unfolding"/>
    <property type="evidence" value="ECO:0007669"/>
    <property type="project" value="UniProtKB-UniRule"/>
</dbReference>
<dbReference type="GO" id="GO:0051603">
    <property type="term" value="P:proteolysis involved in protein catabolic process"/>
    <property type="evidence" value="ECO:0007669"/>
    <property type="project" value="TreeGrafter"/>
</dbReference>
<dbReference type="CDD" id="cd19498">
    <property type="entry name" value="RecA-like_HslU"/>
    <property type="match status" value="1"/>
</dbReference>
<dbReference type="FunFam" id="3.40.50.300:FF:000213">
    <property type="entry name" value="ATP-dependent protease ATPase subunit HslU"/>
    <property type="match status" value="1"/>
</dbReference>
<dbReference type="FunFam" id="3.40.50.300:FF:000220">
    <property type="entry name" value="ATP-dependent protease ATPase subunit HslU"/>
    <property type="match status" value="1"/>
</dbReference>
<dbReference type="Gene3D" id="1.10.8.60">
    <property type="match status" value="1"/>
</dbReference>
<dbReference type="Gene3D" id="3.40.50.300">
    <property type="entry name" value="P-loop containing nucleotide triphosphate hydrolases"/>
    <property type="match status" value="2"/>
</dbReference>
<dbReference type="HAMAP" id="MF_00249">
    <property type="entry name" value="HslU"/>
    <property type="match status" value="1"/>
</dbReference>
<dbReference type="InterPro" id="IPR003593">
    <property type="entry name" value="AAA+_ATPase"/>
</dbReference>
<dbReference type="InterPro" id="IPR050052">
    <property type="entry name" value="ATP-dep_Clp_protease_ClpX"/>
</dbReference>
<dbReference type="InterPro" id="IPR003959">
    <property type="entry name" value="ATPase_AAA_core"/>
</dbReference>
<dbReference type="InterPro" id="IPR019489">
    <property type="entry name" value="Clp_ATPase_C"/>
</dbReference>
<dbReference type="InterPro" id="IPR004491">
    <property type="entry name" value="HslU"/>
</dbReference>
<dbReference type="InterPro" id="IPR027417">
    <property type="entry name" value="P-loop_NTPase"/>
</dbReference>
<dbReference type="NCBIfam" id="TIGR00390">
    <property type="entry name" value="hslU"/>
    <property type="match status" value="1"/>
</dbReference>
<dbReference type="NCBIfam" id="NF003544">
    <property type="entry name" value="PRK05201.1"/>
    <property type="match status" value="1"/>
</dbReference>
<dbReference type="PANTHER" id="PTHR48102">
    <property type="entry name" value="ATP-DEPENDENT CLP PROTEASE ATP-BINDING SUBUNIT CLPX-LIKE, MITOCHONDRIAL-RELATED"/>
    <property type="match status" value="1"/>
</dbReference>
<dbReference type="PANTHER" id="PTHR48102:SF3">
    <property type="entry name" value="ATP-DEPENDENT PROTEASE ATPASE SUBUNIT HSLU"/>
    <property type="match status" value="1"/>
</dbReference>
<dbReference type="Pfam" id="PF00004">
    <property type="entry name" value="AAA"/>
    <property type="match status" value="1"/>
</dbReference>
<dbReference type="Pfam" id="PF07724">
    <property type="entry name" value="AAA_2"/>
    <property type="match status" value="1"/>
</dbReference>
<dbReference type="SMART" id="SM00382">
    <property type="entry name" value="AAA"/>
    <property type="match status" value="1"/>
</dbReference>
<dbReference type="SMART" id="SM01086">
    <property type="entry name" value="ClpB_D2-small"/>
    <property type="match status" value="1"/>
</dbReference>
<dbReference type="SUPFAM" id="SSF52540">
    <property type="entry name" value="P-loop containing nucleoside triphosphate hydrolases"/>
    <property type="match status" value="1"/>
</dbReference>
<protein>
    <recommendedName>
        <fullName evidence="1">ATP-dependent protease ATPase subunit HslU</fullName>
    </recommendedName>
    <alternativeName>
        <fullName evidence="1">Unfoldase HslU</fullName>
    </alternativeName>
</protein>
<feature type="chain" id="PRO_1000100938" description="ATP-dependent protease ATPase subunit HslU">
    <location>
        <begin position="1"/>
        <end position="447"/>
    </location>
</feature>
<feature type="binding site" evidence="1">
    <location>
        <position position="18"/>
    </location>
    <ligand>
        <name>ATP</name>
        <dbReference type="ChEBI" id="CHEBI:30616"/>
    </ligand>
</feature>
<feature type="binding site" evidence="1">
    <location>
        <begin position="60"/>
        <end position="65"/>
    </location>
    <ligand>
        <name>ATP</name>
        <dbReference type="ChEBI" id="CHEBI:30616"/>
    </ligand>
</feature>
<feature type="binding site" evidence="1">
    <location>
        <position position="259"/>
    </location>
    <ligand>
        <name>ATP</name>
        <dbReference type="ChEBI" id="CHEBI:30616"/>
    </ligand>
</feature>
<feature type="binding site" evidence="1">
    <location>
        <position position="325"/>
    </location>
    <ligand>
        <name>ATP</name>
        <dbReference type="ChEBI" id="CHEBI:30616"/>
    </ligand>
</feature>
<feature type="binding site" evidence="1">
    <location>
        <position position="397"/>
    </location>
    <ligand>
        <name>ATP</name>
        <dbReference type="ChEBI" id="CHEBI:30616"/>
    </ligand>
</feature>
<name>HSLU_BURA4</name>
<evidence type="ECO:0000255" key="1">
    <source>
        <dbReference type="HAMAP-Rule" id="MF_00249"/>
    </source>
</evidence>
<keyword id="KW-0067">ATP-binding</keyword>
<keyword id="KW-0143">Chaperone</keyword>
<keyword id="KW-0963">Cytoplasm</keyword>
<keyword id="KW-0547">Nucleotide-binding</keyword>
<keyword id="KW-0346">Stress response</keyword>
<gene>
    <name evidence="1" type="primary">hslU</name>
    <name type="ordered locus">BamMC406_3001</name>
</gene>
<organism>
    <name type="scientific">Burkholderia ambifaria (strain MC40-6)</name>
    <dbReference type="NCBI Taxonomy" id="398577"/>
    <lineage>
        <taxon>Bacteria</taxon>
        <taxon>Pseudomonadati</taxon>
        <taxon>Pseudomonadota</taxon>
        <taxon>Betaproteobacteria</taxon>
        <taxon>Burkholderiales</taxon>
        <taxon>Burkholderiaceae</taxon>
        <taxon>Burkholderia</taxon>
        <taxon>Burkholderia cepacia complex</taxon>
    </lineage>
</organism>
<accession>B1YPR3</accession>